<reference key="1">
    <citation type="journal article" date="2009" name="Appl. Environ. Microbiol.">
        <title>Complete genome sequence of the chemolithoautotrophic marine magnetotactic coccus strain MC-1.</title>
        <authorList>
            <person name="Schubbe S."/>
            <person name="Williams T.J."/>
            <person name="Xie G."/>
            <person name="Kiss H.E."/>
            <person name="Brettin T.S."/>
            <person name="Martinez D."/>
            <person name="Ross C.A."/>
            <person name="Schuler D."/>
            <person name="Cox B.L."/>
            <person name="Nealson K.H."/>
            <person name="Bazylinski D.A."/>
        </authorList>
    </citation>
    <scope>NUCLEOTIDE SEQUENCE [LARGE SCALE GENOMIC DNA]</scope>
    <source>
        <strain>ATCC BAA-1437 / JCM 17883 / MC-1</strain>
    </source>
</reference>
<evidence type="ECO:0000255" key="1">
    <source>
        <dbReference type="HAMAP-Rule" id="MF_00758"/>
    </source>
</evidence>
<name>Y726_MAGMM</name>
<feature type="chain" id="PRO_1000083511" description="UPF0301 protein Mmc1_0726">
    <location>
        <begin position="1"/>
        <end position="186"/>
    </location>
</feature>
<gene>
    <name type="ordered locus">Mmc1_0726</name>
</gene>
<keyword id="KW-1185">Reference proteome</keyword>
<comment type="similarity">
    <text evidence="1">Belongs to the UPF0301 (AlgH) family.</text>
</comment>
<accession>A0L5K4</accession>
<proteinExistence type="inferred from homology"/>
<dbReference type="EMBL" id="CP000471">
    <property type="protein sequence ID" value="ABK43247.1"/>
    <property type="molecule type" value="Genomic_DNA"/>
</dbReference>
<dbReference type="RefSeq" id="WP_011712407.1">
    <property type="nucleotide sequence ID" value="NC_008576.1"/>
</dbReference>
<dbReference type="SMR" id="A0L5K4"/>
<dbReference type="STRING" id="156889.Mmc1_0726"/>
<dbReference type="KEGG" id="mgm:Mmc1_0726"/>
<dbReference type="eggNOG" id="COG1678">
    <property type="taxonomic scope" value="Bacteria"/>
</dbReference>
<dbReference type="HOGENOM" id="CLU_057596_1_0_5"/>
<dbReference type="OrthoDB" id="9807486at2"/>
<dbReference type="Proteomes" id="UP000002586">
    <property type="component" value="Chromosome"/>
</dbReference>
<dbReference type="GO" id="GO:0005829">
    <property type="term" value="C:cytosol"/>
    <property type="evidence" value="ECO:0007669"/>
    <property type="project" value="TreeGrafter"/>
</dbReference>
<dbReference type="Gene3D" id="3.40.1740.10">
    <property type="entry name" value="VC0467-like"/>
    <property type="match status" value="1"/>
</dbReference>
<dbReference type="HAMAP" id="MF_00758">
    <property type="entry name" value="UPF0301"/>
    <property type="match status" value="1"/>
</dbReference>
<dbReference type="InterPro" id="IPR003774">
    <property type="entry name" value="AlgH-like"/>
</dbReference>
<dbReference type="PANTHER" id="PTHR30327">
    <property type="entry name" value="UNCHARACTERIZED PROTEIN YQGE"/>
    <property type="match status" value="1"/>
</dbReference>
<dbReference type="PANTHER" id="PTHR30327:SF1">
    <property type="entry name" value="UPF0301 PROTEIN YQGE"/>
    <property type="match status" value="1"/>
</dbReference>
<dbReference type="Pfam" id="PF02622">
    <property type="entry name" value="DUF179"/>
    <property type="match status" value="1"/>
</dbReference>
<dbReference type="SUPFAM" id="SSF143456">
    <property type="entry name" value="VC0467-like"/>
    <property type="match status" value="1"/>
</dbReference>
<protein>
    <recommendedName>
        <fullName evidence="1">UPF0301 protein Mmc1_0726</fullName>
    </recommendedName>
</protein>
<organism>
    <name type="scientific">Magnetococcus marinus (strain ATCC BAA-1437 / JCM 17883 / MC-1)</name>
    <dbReference type="NCBI Taxonomy" id="156889"/>
    <lineage>
        <taxon>Bacteria</taxon>
        <taxon>Pseudomonadati</taxon>
        <taxon>Pseudomonadota</taxon>
        <taxon>Alphaproteobacteria</taxon>
        <taxon>Magnetococcales</taxon>
        <taxon>Magnetococcaceae</taxon>
        <taxon>Magnetococcus</taxon>
    </lineage>
</organism>
<sequence length="186" mass="20622">MKFATLAGKFLIAVPSLADPFFERTVLYLCAHNEDGALGLVINQPLDTTMSQMAGYLELDWQRPGVDRVYMGGPVSPEQGFVLFEQALDLPGIMMLPDDLYMGTNPDIIRLMGRAGAQERFLFALGYAGWEAGQLEHELQENSWLVCDAQRSILFDMGYAQRWEAAIRSMGIDPALLVDASHGFAN</sequence>